<proteinExistence type="inferred from homology"/>
<organism>
    <name type="scientific">Nostoc sp. (strain PCC 7120 / SAG 25.82 / UTEX 2576)</name>
    <dbReference type="NCBI Taxonomy" id="103690"/>
    <lineage>
        <taxon>Bacteria</taxon>
        <taxon>Bacillati</taxon>
        <taxon>Cyanobacteriota</taxon>
        <taxon>Cyanophyceae</taxon>
        <taxon>Nostocales</taxon>
        <taxon>Nostocaceae</taxon>
        <taxon>Nostoc</taxon>
    </lineage>
</organism>
<dbReference type="EMBL" id="L14863">
    <property type="protein sequence ID" value="AAA74627.1"/>
    <property type="molecule type" value="Genomic_DNA"/>
</dbReference>
<dbReference type="EMBL" id="BA000019">
    <property type="protein sequence ID" value="BAB76757.1"/>
    <property type="molecule type" value="Genomic_DNA"/>
</dbReference>
<dbReference type="PIR" id="AB2438">
    <property type="entry name" value="AB2438"/>
</dbReference>
<dbReference type="RefSeq" id="WP_010999184.1">
    <property type="nucleotide sequence ID" value="NZ_RSCN01000014.1"/>
</dbReference>
<dbReference type="SMR" id="Q44247"/>
<dbReference type="STRING" id="103690.gene:10497116"/>
<dbReference type="KEGG" id="ana:all5058"/>
<dbReference type="eggNOG" id="COG0231">
    <property type="taxonomic scope" value="Bacteria"/>
</dbReference>
<dbReference type="OrthoDB" id="9801844at2"/>
<dbReference type="UniPathway" id="UPA00345"/>
<dbReference type="Proteomes" id="UP000002483">
    <property type="component" value="Chromosome"/>
</dbReference>
<dbReference type="GO" id="GO:0005737">
    <property type="term" value="C:cytoplasm"/>
    <property type="evidence" value="ECO:0007669"/>
    <property type="project" value="UniProtKB-SubCell"/>
</dbReference>
<dbReference type="GO" id="GO:0003746">
    <property type="term" value="F:translation elongation factor activity"/>
    <property type="evidence" value="ECO:0007669"/>
    <property type="project" value="UniProtKB-UniRule"/>
</dbReference>
<dbReference type="GO" id="GO:0043043">
    <property type="term" value="P:peptide biosynthetic process"/>
    <property type="evidence" value="ECO:0007669"/>
    <property type="project" value="InterPro"/>
</dbReference>
<dbReference type="CDD" id="cd04470">
    <property type="entry name" value="S1_EF-P_repeat_1"/>
    <property type="match status" value="1"/>
</dbReference>
<dbReference type="CDD" id="cd05794">
    <property type="entry name" value="S1_EF-P_repeat_2"/>
    <property type="match status" value="1"/>
</dbReference>
<dbReference type="FunFam" id="2.30.30.30:FF:000003">
    <property type="entry name" value="Elongation factor P"/>
    <property type="match status" value="1"/>
</dbReference>
<dbReference type="FunFam" id="2.40.50.140:FF:000004">
    <property type="entry name" value="Elongation factor P"/>
    <property type="match status" value="1"/>
</dbReference>
<dbReference type="FunFam" id="2.40.50.140:FF:000009">
    <property type="entry name" value="Elongation factor P"/>
    <property type="match status" value="1"/>
</dbReference>
<dbReference type="Gene3D" id="2.30.30.30">
    <property type="match status" value="1"/>
</dbReference>
<dbReference type="Gene3D" id="2.40.50.140">
    <property type="entry name" value="Nucleic acid-binding proteins"/>
    <property type="match status" value="2"/>
</dbReference>
<dbReference type="HAMAP" id="MF_00141">
    <property type="entry name" value="EF_P"/>
    <property type="match status" value="1"/>
</dbReference>
<dbReference type="InterPro" id="IPR015365">
    <property type="entry name" value="Elong-fact-P_C"/>
</dbReference>
<dbReference type="InterPro" id="IPR012340">
    <property type="entry name" value="NA-bd_OB-fold"/>
</dbReference>
<dbReference type="InterPro" id="IPR014722">
    <property type="entry name" value="Rib_uL2_dom2"/>
</dbReference>
<dbReference type="InterPro" id="IPR020599">
    <property type="entry name" value="Transl_elong_fac_P/YeiP"/>
</dbReference>
<dbReference type="InterPro" id="IPR013185">
    <property type="entry name" value="Transl_elong_KOW-like"/>
</dbReference>
<dbReference type="InterPro" id="IPR001059">
    <property type="entry name" value="Transl_elong_P/YeiP_cen"/>
</dbReference>
<dbReference type="InterPro" id="IPR013852">
    <property type="entry name" value="Transl_elong_P/YeiP_CS"/>
</dbReference>
<dbReference type="InterPro" id="IPR011768">
    <property type="entry name" value="Transl_elongation_fac_P"/>
</dbReference>
<dbReference type="InterPro" id="IPR008991">
    <property type="entry name" value="Translation_prot_SH3-like_sf"/>
</dbReference>
<dbReference type="NCBIfam" id="TIGR00038">
    <property type="entry name" value="efp"/>
    <property type="match status" value="1"/>
</dbReference>
<dbReference type="NCBIfam" id="NF001810">
    <property type="entry name" value="PRK00529.1"/>
    <property type="match status" value="1"/>
</dbReference>
<dbReference type="PANTHER" id="PTHR30053">
    <property type="entry name" value="ELONGATION FACTOR P"/>
    <property type="match status" value="1"/>
</dbReference>
<dbReference type="PANTHER" id="PTHR30053:SF12">
    <property type="entry name" value="ELONGATION FACTOR P (EF-P) FAMILY PROTEIN"/>
    <property type="match status" value="1"/>
</dbReference>
<dbReference type="Pfam" id="PF01132">
    <property type="entry name" value="EFP"/>
    <property type="match status" value="1"/>
</dbReference>
<dbReference type="Pfam" id="PF08207">
    <property type="entry name" value="EFP_N"/>
    <property type="match status" value="1"/>
</dbReference>
<dbReference type="Pfam" id="PF09285">
    <property type="entry name" value="Elong-fact-P_C"/>
    <property type="match status" value="1"/>
</dbReference>
<dbReference type="PIRSF" id="PIRSF005901">
    <property type="entry name" value="EF-P"/>
    <property type="match status" value="1"/>
</dbReference>
<dbReference type="SMART" id="SM01185">
    <property type="entry name" value="EFP"/>
    <property type="match status" value="1"/>
</dbReference>
<dbReference type="SMART" id="SM00841">
    <property type="entry name" value="Elong-fact-P_C"/>
    <property type="match status" value="1"/>
</dbReference>
<dbReference type="SUPFAM" id="SSF50249">
    <property type="entry name" value="Nucleic acid-binding proteins"/>
    <property type="match status" value="2"/>
</dbReference>
<dbReference type="SUPFAM" id="SSF50104">
    <property type="entry name" value="Translation proteins SH3-like domain"/>
    <property type="match status" value="1"/>
</dbReference>
<dbReference type="PROSITE" id="PS01275">
    <property type="entry name" value="EFP"/>
    <property type="match status" value="1"/>
</dbReference>
<accession>Q44247</accession>
<sequence length="185" mass="20496">MISSNDFRPGVSIVLDGSVWRVIDFLHVKPGKGSAFVRTTLKNVQSGKVLEKTFRAGETVPQATLEKITMQHTYKEGDEFVFMDMESYEEGRLSAAQIGDRVKYLKEGMEVNVIRWGEQVLEVELANSVVLEVIQTDPGVKGDTATGGTKPAIVETGATVMVPLFISQGERIKIDTRDDKYLGRE</sequence>
<gene>
    <name type="primary">efp</name>
    <name type="ordered locus">all5058</name>
</gene>
<evidence type="ECO:0000250" key="1"/>
<evidence type="ECO:0000305" key="2"/>
<keyword id="KW-0963">Cytoplasm</keyword>
<keyword id="KW-0251">Elongation factor</keyword>
<keyword id="KW-0648">Protein biosynthesis</keyword>
<keyword id="KW-1185">Reference proteome</keyword>
<reference key="1">
    <citation type="journal article" date="1993" name="J. Bacteriol.">
        <title>Genes for two subunits of acetyl coenzyme A carboxylase of Anabaena sp. strain PCC 7120: biotin carboxylase and biotin carboxyl carrier protein.</title>
        <authorList>
            <person name="Gornicki P."/>
            <person name="Scappino L.A."/>
            <person name="Haselkorn R."/>
        </authorList>
    </citation>
    <scope>NUCLEOTIDE SEQUENCE [GENOMIC DNA]</scope>
</reference>
<reference key="2">
    <citation type="journal article" date="2001" name="DNA Res.">
        <title>Complete genomic sequence of the filamentous nitrogen-fixing cyanobacterium Anabaena sp. strain PCC 7120.</title>
        <authorList>
            <person name="Kaneko T."/>
            <person name="Nakamura Y."/>
            <person name="Wolk C.P."/>
            <person name="Kuritz T."/>
            <person name="Sasamoto S."/>
            <person name="Watanabe A."/>
            <person name="Iriguchi M."/>
            <person name="Ishikawa A."/>
            <person name="Kawashima K."/>
            <person name="Kimura T."/>
            <person name="Kishida Y."/>
            <person name="Kohara M."/>
            <person name="Matsumoto M."/>
            <person name="Matsuno A."/>
            <person name="Muraki A."/>
            <person name="Nakazaki N."/>
            <person name="Shimpo S."/>
            <person name="Sugimoto M."/>
            <person name="Takazawa M."/>
            <person name="Yamada M."/>
            <person name="Yasuda M."/>
            <person name="Tabata S."/>
        </authorList>
    </citation>
    <scope>NUCLEOTIDE SEQUENCE [LARGE SCALE GENOMIC DNA]</scope>
    <source>
        <strain>PCC 7120 / SAG 25.82 / UTEX 2576</strain>
    </source>
</reference>
<comment type="function">
    <text evidence="1">Involved in peptide bond synthesis. Stimulates efficient translation and peptide-bond synthesis on native or reconstituted 70S ribosomes in vitro. Probably functions indirectly by altering the affinity of the ribosome for aminoacyl-tRNA, thus increasing their reactivity as acceptors for peptidyl transferase (By similarity).</text>
</comment>
<comment type="pathway">
    <text>Protein biosynthesis; polypeptide chain elongation.</text>
</comment>
<comment type="subcellular location">
    <subcellularLocation>
        <location evidence="1">Cytoplasm</location>
    </subcellularLocation>
</comment>
<comment type="similarity">
    <text evidence="2">Belongs to the elongation factor P family.</text>
</comment>
<protein>
    <recommendedName>
        <fullName>Elongation factor P</fullName>
        <shortName>EF-P</shortName>
    </recommendedName>
</protein>
<name>EFP_NOSS1</name>
<feature type="chain" id="PRO_0000094188" description="Elongation factor P">
    <location>
        <begin position="1"/>
        <end position="185"/>
    </location>
</feature>